<sequence>MLERIKVCFTESIQTQIAAAEALPDAISRAAMTLVHSLLNGNKILCCGNGTSAANAQHFAASMINRFETERPSLPAIALNTDNVVLTAIANDRLHDEVYAKQVRALGHAGDVLLAISTRGNSRDIVKAVEAAVTRDMTIVALTGYDGGELAGLLGPQDVEIRIPSHHSARIQEMHMLTVNCLCDLIDNTLFPHQDD</sequence>
<keyword id="KW-0235">DNA replication</keyword>
<keyword id="KW-1185">Reference proteome</keyword>
<gene>
    <name evidence="1" type="primary">diaA</name>
    <name type="ordered locus">STM3266</name>
</gene>
<protein>
    <recommendedName>
        <fullName evidence="1">DnaA initiator-associating protein DiaA</fullName>
    </recommendedName>
</protein>
<organism>
    <name type="scientific">Salmonella typhimurium (strain LT2 / SGSC1412 / ATCC 700720)</name>
    <dbReference type="NCBI Taxonomy" id="99287"/>
    <lineage>
        <taxon>Bacteria</taxon>
        <taxon>Pseudomonadati</taxon>
        <taxon>Pseudomonadota</taxon>
        <taxon>Gammaproteobacteria</taxon>
        <taxon>Enterobacterales</taxon>
        <taxon>Enterobacteriaceae</taxon>
        <taxon>Salmonella</taxon>
    </lineage>
</organism>
<comment type="function">
    <text evidence="1">Required for the timely initiation of chromosomal replication via direct interactions with the DnaA initiator protein.</text>
</comment>
<comment type="subunit">
    <text evidence="1">Homotetramer; dimer of dimers.</text>
</comment>
<comment type="similarity">
    <text evidence="1">Belongs to the SIS family. DiaA subfamily.</text>
</comment>
<proteinExistence type="inferred from homology"/>
<reference key="1">
    <citation type="journal article" date="2001" name="Nature">
        <title>Complete genome sequence of Salmonella enterica serovar Typhimurium LT2.</title>
        <authorList>
            <person name="McClelland M."/>
            <person name="Sanderson K.E."/>
            <person name="Spieth J."/>
            <person name="Clifton S.W."/>
            <person name="Latreille P."/>
            <person name="Courtney L."/>
            <person name="Porwollik S."/>
            <person name="Ali J."/>
            <person name="Dante M."/>
            <person name="Du F."/>
            <person name="Hou S."/>
            <person name="Layman D."/>
            <person name="Leonard S."/>
            <person name="Nguyen C."/>
            <person name="Scott K."/>
            <person name="Holmes A."/>
            <person name="Grewal N."/>
            <person name="Mulvaney E."/>
            <person name="Ryan E."/>
            <person name="Sun H."/>
            <person name="Florea L."/>
            <person name="Miller W."/>
            <person name="Stoneking T."/>
            <person name="Nhan M."/>
            <person name="Waterston R."/>
            <person name="Wilson R.K."/>
        </authorList>
    </citation>
    <scope>NUCLEOTIDE SEQUENCE [LARGE SCALE GENOMIC DNA]</scope>
    <source>
        <strain>LT2 / SGSC1412 / ATCC 700720</strain>
    </source>
</reference>
<evidence type="ECO:0000255" key="1">
    <source>
        <dbReference type="HAMAP-Rule" id="MF_01157"/>
    </source>
</evidence>
<name>DIAA_SALTY</name>
<feature type="chain" id="PRO_0000136561" description="DnaA initiator-associating protein DiaA">
    <location>
        <begin position="1"/>
        <end position="196"/>
    </location>
</feature>
<feature type="domain" description="SIS" evidence="1">
    <location>
        <begin position="34"/>
        <end position="196"/>
    </location>
</feature>
<dbReference type="EMBL" id="AE006468">
    <property type="protein sequence ID" value="AAL22138.1"/>
    <property type="molecule type" value="Genomic_DNA"/>
</dbReference>
<dbReference type="RefSeq" id="WP_000893481.1">
    <property type="nucleotide sequence ID" value="NC_003197.2"/>
</dbReference>
<dbReference type="SMR" id="Q8ZLU2"/>
<dbReference type="STRING" id="99287.STM3266"/>
<dbReference type="PaxDb" id="99287-STM3266"/>
<dbReference type="GeneID" id="66757607"/>
<dbReference type="KEGG" id="stm:STM3266"/>
<dbReference type="PATRIC" id="fig|99287.12.peg.3465"/>
<dbReference type="HOGENOM" id="CLU_080999_3_1_6"/>
<dbReference type="OMA" id="EMHILMI"/>
<dbReference type="PhylomeDB" id="Q8ZLU2"/>
<dbReference type="BioCyc" id="SENT99287:STM3266-MONOMER"/>
<dbReference type="Proteomes" id="UP000001014">
    <property type="component" value="Chromosome"/>
</dbReference>
<dbReference type="GO" id="GO:1990102">
    <property type="term" value="C:DnaA-DiaA complex"/>
    <property type="evidence" value="ECO:0000318"/>
    <property type="project" value="GO_Central"/>
</dbReference>
<dbReference type="GO" id="GO:0097367">
    <property type="term" value="F:carbohydrate derivative binding"/>
    <property type="evidence" value="ECO:0007669"/>
    <property type="project" value="InterPro"/>
</dbReference>
<dbReference type="GO" id="GO:1901135">
    <property type="term" value="P:carbohydrate derivative metabolic process"/>
    <property type="evidence" value="ECO:0007669"/>
    <property type="project" value="InterPro"/>
</dbReference>
<dbReference type="GO" id="GO:0006260">
    <property type="term" value="P:DNA replication"/>
    <property type="evidence" value="ECO:0007669"/>
    <property type="project" value="UniProtKB-UniRule"/>
</dbReference>
<dbReference type="GO" id="GO:0032298">
    <property type="term" value="P:positive regulation of DNA-templated DNA replication initiation"/>
    <property type="evidence" value="ECO:0000318"/>
    <property type="project" value="GO_Central"/>
</dbReference>
<dbReference type="CDD" id="cd05006">
    <property type="entry name" value="SIS_GmhA"/>
    <property type="match status" value="1"/>
</dbReference>
<dbReference type="FunFam" id="3.40.50.10490:FF:000006">
    <property type="entry name" value="DnaA initiator-associating protein DiaA"/>
    <property type="match status" value="1"/>
</dbReference>
<dbReference type="Gene3D" id="3.40.50.10490">
    <property type="entry name" value="Glucose-6-phosphate isomerase like protein, domain 1"/>
    <property type="match status" value="1"/>
</dbReference>
<dbReference type="HAMAP" id="MF_01157">
    <property type="entry name" value="SIS_DiaA"/>
    <property type="match status" value="1"/>
</dbReference>
<dbReference type="InterPro" id="IPR023070">
    <property type="entry name" value="DiaA"/>
</dbReference>
<dbReference type="InterPro" id="IPR035461">
    <property type="entry name" value="GmhA/DiaA"/>
</dbReference>
<dbReference type="InterPro" id="IPR001347">
    <property type="entry name" value="SIS_dom"/>
</dbReference>
<dbReference type="InterPro" id="IPR046348">
    <property type="entry name" value="SIS_dom_sf"/>
</dbReference>
<dbReference type="InterPro" id="IPR050099">
    <property type="entry name" value="SIS_GmhA/DiaA_subfam"/>
</dbReference>
<dbReference type="NCBIfam" id="NF008138">
    <property type="entry name" value="PRK10886.1"/>
    <property type="match status" value="1"/>
</dbReference>
<dbReference type="PANTHER" id="PTHR30390:SF6">
    <property type="entry name" value="DNAA INITIATOR-ASSOCIATING PROTEIN DIAA"/>
    <property type="match status" value="1"/>
</dbReference>
<dbReference type="PANTHER" id="PTHR30390">
    <property type="entry name" value="SEDOHEPTULOSE 7-PHOSPHATE ISOMERASE / DNAA INITIATOR-ASSOCIATING FACTOR FOR REPLICATION INITIATION"/>
    <property type="match status" value="1"/>
</dbReference>
<dbReference type="Pfam" id="PF13580">
    <property type="entry name" value="SIS_2"/>
    <property type="match status" value="1"/>
</dbReference>
<dbReference type="SUPFAM" id="SSF53697">
    <property type="entry name" value="SIS domain"/>
    <property type="match status" value="1"/>
</dbReference>
<dbReference type="PROSITE" id="PS51464">
    <property type="entry name" value="SIS"/>
    <property type="match status" value="1"/>
</dbReference>
<accession>Q8ZLU2</accession>